<evidence type="ECO:0000256" key="1">
    <source>
        <dbReference type="SAM" id="MobiDB-lite"/>
    </source>
</evidence>
<evidence type="ECO:0000269" key="2">
    <source>
    </source>
</evidence>
<evidence type="ECO:0000269" key="3">
    <source>
    </source>
</evidence>
<evidence type="ECO:0000269" key="4">
    <source>
    </source>
</evidence>
<evidence type="ECO:0000269" key="5">
    <source>
    </source>
</evidence>
<evidence type="ECO:0000305" key="6"/>
<feature type="chain" id="PRO_0000194034" description="tRNA-splicing endonuclease subunit SEN54">
    <location>
        <begin position="1"/>
        <end position="467"/>
    </location>
</feature>
<feature type="region of interest" description="Disordered" evidence="1">
    <location>
        <begin position="1"/>
        <end position="32"/>
    </location>
</feature>
<feature type="region of interest" description="Disordered" evidence="1">
    <location>
        <begin position="374"/>
        <end position="413"/>
    </location>
</feature>
<feature type="compositionally biased region" description="Acidic residues" evidence="1">
    <location>
        <begin position="18"/>
        <end position="29"/>
    </location>
</feature>
<feature type="compositionally biased region" description="Basic residues" evidence="1">
    <location>
        <begin position="401"/>
        <end position="413"/>
    </location>
</feature>
<organism>
    <name type="scientific">Saccharomyces cerevisiae (strain ATCC 204508 / S288c)</name>
    <name type="common">Baker's yeast</name>
    <dbReference type="NCBI Taxonomy" id="559292"/>
    <lineage>
        <taxon>Eukaryota</taxon>
        <taxon>Fungi</taxon>
        <taxon>Dikarya</taxon>
        <taxon>Ascomycota</taxon>
        <taxon>Saccharomycotina</taxon>
        <taxon>Saccharomycetes</taxon>
        <taxon>Saccharomycetales</taxon>
        <taxon>Saccharomycetaceae</taxon>
        <taxon>Saccharomyces</taxon>
    </lineage>
</organism>
<sequence>MQFAGKKTDQVTTSNPGFEEEEEEEEELQQDWSQLASLVSKNAALSLPKRGEKDYEPDGTNLQDLLLYNASKAMFDTISDSIRGTTVKSEVRGYYVPHKHQAVLLKPKGSFMQTMGRADSTGELWLDFHEFVYLAERGTILPYYRLEAGSNKSSKHETEILLSMEDLYSLFSSQQEMDQYFVFAHLKRLGFILKPSNQEAAVKTSFFPLKKQRSNLQAITWRLLSLFKIQELSLFSGFFYSKWNFFFRKYTTSPQLYQGLNRLVRSVAVPKNKKELLDAQSDREFQKVKDIPLTFKVWKPHSNFKKRDPGLPDFQVFVYNKNDDLQHFPTYKELRSMFSSLDYKFEFLSEIEDDDDWETNSYVEDIPRKEYIHKRSAKSQTEKSESSMKASFQKKTAQSSTKKKRKAYPPHIQQNRRLKTGYRSFIIAIMDNGLISFVKMSEADFGSESVWYTPNTQKKVDQRWKKH</sequence>
<accession>Q02825</accession>
<accession>D6W3T4</accession>
<protein>
    <recommendedName>
        <fullName>tRNA-splicing endonuclease subunit SEN54</fullName>
    </recommendedName>
    <alternativeName>
        <fullName>Splicing endonuclease of 54 kDa</fullName>
    </alternativeName>
    <alternativeName>
        <fullName>tRNA-intron endonuclease SEN54</fullName>
    </alternativeName>
</protein>
<comment type="function">
    <text>Non-catalytic subunit of the tRNA-splicing endonuclease complex, a complex responsible for identification and cleavage of the splice sites in pre-tRNA. It cleaves pre-tRNA at the 5' and 3' splice sites to release the intron. The products are an intron and two tRNA half-molecules bearing 2',3' cyclic phosphate and 5'-OH termini. There are no conserved sequences at the splice sites, but the intron is invariably located at the same site in the gene, placing the splice sites an invariant distance from the constant structural features of the tRNA body. May be required to embody the molecular ruler of the complex.</text>
</comment>
<comment type="subunit">
    <text evidence="5">tRNA splicing endonuclease is a heterotetramer composed of SEN2, SEN15, SEN34 and SEN54. Interacts directly with SEN2.</text>
</comment>
<comment type="interaction">
    <interactant intactId="EBI-16829">
        <id>Q02825</id>
    </interactant>
    <interactant intactId="EBI-16953">
        <id>P16658</id>
        <label>SEN2</label>
    </interactant>
    <organismsDiffer>false</organismsDiffer>
    <experiments>5</experiments>
</comment>
<comment type="subcellular location">
    <subcellularLocation>
        <location evidence="2">Nucleus</location>
    </subcellularLocation>
    <subcellularLocation>
        <location evidence="2">Endomembrane system</location>
        <topology evidence="2">Peripheral membrane protein</topology>
    </subcellularLocation>
    <subcellularLocation>
        <location evidence="2 4">Mitochondrion outer membrane</location>
        <topology evidence="2 4">Peripheral membrane protein</topology>
        <orientation evidence="2 4">Cytoplasmic side</orientation>
    </subcellularLocation>
    <text>The tRNA splicing endonuclease complex is predominantly associated with the outer membrane of mitochondria, suggesting that tRNA splicing mainly takes place on the mitochondrial surface.</text>
</comment>
<comment type="miscellaneous">
    <text evidence="3">The tRNA splicing endonuclease complex is present with 100 molecules/cell.</text>
</comment>
<comment type="miscellaneous">
    <text evidence="3">Present with 531 molecules/cell in log phase SD medium.</text>
</comment>
<comment type="similarity">
    <text evidence="6">Belongs to the SEN54 family.</text>
</comment>
<gene>
    <name type="primary">SEN54</name>
    <name type="ordered locus">YPL083C</name>
    <name type="ORF">LPF3C</name>
</gene>
<keyword id="KW-0903">Direct protein sequencing</keyword>
<keyword id="KW-0472">Membrane</keyword>
<keyword id="KW-0496">Mitochondrion</keyword>
<keyword id="KW-1000">Mitochondrion outer membrane</keyword>
<keyword id="KW-0539">Nucleus</keyword>
<keyword id="KW-1185">Reference proteome</keyword>
<keyword id="KW-0819">tRNA processing</keyword>
<dbReference type="EMBL" id="U41849">
    <property type="protein sequence ID" value="AAB68256.1"/>
    <property type="molecule type" value="Genomic_DNA"/>
</dbReference>
<dbReference type="EMBL" id="BK006949">
    <property type="protein sequence ID" value="DAA11350.1"/>
    <property type="molecule type" value="Genomic_DNA"/>
</dbReference>
<dbReference type="PIR" id="S61105">
    <property type="entry name" value="S61105"/>
</dbReference>
<dbReference type="RefSeq" id="NP_015242.1">
    <property type="nucleotide sequence ID" value="NM_001183897.1"/>
</dbReference>
<dbReference type="BioGRID" id="36098">
    <property type="interactions" value="116"/>
</dbReference>
<dbReference type="ComplexPortal" id="CPX-1832">
    <property type="entry name" value="tRNA-intron endonuclease complex"/>
</dbReference>
<dbReference type="DIP" id="DIP-4452N"/>
<dbReference type="FunCoup" id="Q02825">
    <property type="interactions" value="88"/>
</dbReference>
<dbReference type="IntAct" id="Q02825">
    <property type="interactions" value="9"/>
</dbReference>
<dbReference type="MINT" id="Q02825"/>
<dbReference type="STRING" id="4932.YPL083C"/>
<dbReference type="iPTMnet" id="Q02825"/>
<dbReference type="PaxDb" id="4932-YPL083C"/>
<dbReference type="PeptideAtlas" id="Q02825"/>
<dbReference type="EnsemblFungi" id="YPL083C_mRNA">
    <property type="protein sequence ID" value="YPL083C"/>
    <property type="gene ID" value="YPL083C"/>
</dbReference>
<dbReference type="GeneID" id="856022"/>
<dbReference type="KEGG" id="sce:YPL083C"/>
<dbReference type="AGR" id="SGD:S000006004"/>
<dbReference type="SGD" id="S000006004">
    <property type="gene designation" value="SEN54"/>
</dbReference>
<dbReference type="VEuPathDB" id="FungiDB:YPL083C"/>
<dbReference type="eggNOG" id="KOG4772">
    <property type="taxonomic scope" value="Eukaryota"/>
</dbReference>
<dbReference type="GeneTree" id="ENSGT00390000004214"/>
<dbReference type="HOGENOM" id="CLU_028449_0_1_1"/>
<dbReference type="InParanoid" id="Q02825"/>
<dbReference type="OMA" id="FNVWKPQ"/>
<dbReference type="OrthoDB" id="408683at2759"/>
<dbReference type="BioCyc" id="MetaCyc:G3O-33989-MONOMER"/>
<dbReference type="BioCyc" id="YEAST:G3O-33989-MONOMER"/>
<dbReference type="BRENDA" id="4.6.1.16">
    <property type="organism ID" value="984"/>
</dbReference>
<dbReference type="BioGRID-ORCS" id="856022">
    <property type="hits" value="0 hits in 10 CRISPR screens"/>
</dbReference>
<dbReference type="PRO" id="PR:Q02825"/>
<dbReference type="Proteomes" id="UP000002311">
    <property type="component" value="Chromosome XVI"/>
</dbReference>
<dbReference type="RNAct" id="Q02825">
    <property type="molecule type" value="protein"/>
</dbReference>
<dbReference type="GO" id="GO:0012505">
    <property type="term" value="C:endomembrane system"/>
    <property type="evidence" value="ECO:0007669"/>
    <property type="project" value="UniProtKB-SubCell"/>
</dbReference>
<dbReference type="GO" id="GO:0005741">
    <property type="term" value="C:mitochondrial outer membrane"/>
    <property type="evidence" value="ECO:0000314"/>
    <property type="project" value="SGD"/>
</dbReference>
<dbReference type="GO" id="GO:0005739">
    <property type="term" value="C:mitochondrion"/>
    <property type="evidence" value="ECO:0007005"/>
    <property type="project" value="SGD"/>
</dbReference>
<dbReference type="GO" id="GO:0000214">
    <property type="term" value="C:tRNA-intron endonuclease complex"/>
    <property type="evidence" value="ECO:0000314"/>
    <property type="project" value="SGD"/>
</dbReference>
<dbReference type="GO" id="GO:0000379">
    <property type="term" value="P:tRNA-type intron splice site recognition and cleavage"/>
    <property type="evidence" value="ECO:0000314"/>
    <property type="project" value="ComplexPortal"/>
</dbReference>
<dbReference type="InterPro" id="IPR024337">
    <property type="entry name" value="tRNA_splic_suSen54"/>
</dbReference>
<dbReference type="InterPro" id="IPR024336">
    <property type="entry name" value="tRNA_splic_suSen54_N"/>
</dbReference>
<dbReference type="PANTHER" id="PTHR21027">
    <property type="entry name" value="TRNA-SPLICING ENDONUCLEASE SUBUNIT SEN54"/>
    <property type="match status" value="1"/>
</dbReference>
<dbReference type="PANTHER" id="PTHR21027:SF1">
    <property type="entry name" value="TRNA-SPLICING ENDONUCLEASE SUBUNIT SEN54"/>
    <property type="match status" value="1"/>
</dbReference>
<dbReference type="Pfam" id="PF12928">
    <property type="entry name" value="tRNA_int_end_N2"/>
    <property type="match status" value="1"/>
</dbReference>
<reference key="1">
    <citation type="journal article" date="1997" name="Nature">
        <title>The nucleotide sequence of Saccharomyces cerevisiae chromosome XVI.</title>
        <authorList>
            <person name="Bussey H."/>
            <person name="Storms R.K."/>
            <person name="Ahmed A."/>
            <person name="Albermann K."/>
            <person name="Allen E."/>
            <person name="Ansorge W."/>
            <person name="Araujo R."/>
            <person name="Aparicio A."/>
            <person name="Barrell B.G."/>
            <person name="Badcock K."/>
            <person name="Benes V."/>
            <person name="Botstein D."/>
            <person name="Bowman S."/>
            <person name="Brueckner M."/>
            <person name="Carpenter J."/>
            <person name="Cherry J.M."/>
            <person name="Chung E."/>
            <person name="Churcher C.M."/>
            <person name="Coster F."/>
            <person name="Davis K."/>
            <person name="Davis R.W."/>
            <person name="Dietrich F.S."/>
            <person name="Delius H."/>
            <person name="DiPaolo T."/>
            <person name="Dubois E."/>
            <person name="Duesterhoeft A."/>
            <person name="Duncan M."/>
            <person name="Floeth M."/>
            <person name="Fortin N."/>
            <person name="Friesen J.D."/>
            <person name="Fritz C."/>
            <person name="Goffeau A."/>
            <person name="Hall J."/>
            <person name="Hebling U."/>
            <person name="Heumann K."/>
            <person name="Hilbert H."/>
            <person name="Hillier L.W."/>
            <person name="Hunicke-Smith S."/>
            <person name="Hyman R.W."/>
            <person name="Johnston M."/>
            <person name="Kalman S."/>
            <person name="Kleine K."/>
            <person name="Komp C."/>
            <person name="Kurdi O."/>
            <person name="Lashkari D."/>
            <person name="Lew H."/>
            <person name="Lin A."/>
            <person name="Lin D."/>
            <person name="Louis E.J."/>
            <person name="Marathe R."/>
            <person name="Messenguy F."/>
            <person name="Mewes H.-W."/>
            <person name="Mirtipati S."/>
            <person name="Moestl D."/>
            <person name="Mueller-Auer S."/>
            <person name="Namath A."/>
            <person name="Nentwich U."/>
            <person name="Oefner P."/>
            <person name="Pearson D."/>
            <person name="Petel F.X."/>
            <person name="Pohl T.M."/>
            <person name="Purnelle B."/>
            <person name="Rajandream M.A."/>
            <person name="Rechmann S."/>
            <person name="Rieger M."/>
            <person name="Riles L."/>
            <person name="Roberts D."/>
            <person name="Schaefer M."/>
            <person name="Scharfe M."/>
            <person name="Scherens B."/>
            <person name="Schramm S."/>
            <person name="Schroeder M."/>
            <person name="Sdicu A.-M."/>
            <person name="Tettelin H."/>
            <person name="Urrestarazu L.A."/>
            <person name="Ushinsky S."/>
            <person name="Vierendeels F."/>
            <person name="Vissers S."/>
            <person name="Voss H."/>
            <person name="Walsh S.V."/>
            <person name="Wambutt R."/>
            <person name="Wang Y."/>
            <person name="Wedler E."/>
            <person name="Wedler H."/>
            <person name="Winnett E."/>
            <person name="Zhong W.-W."/>
            <person name="Zollner A."/>
            <person name="Vo D.H."/>
            <person name="Hani J."/>
        </authorList>
    </citation>
    <scope>NUCLEOTIDE SEQUENCE [LARGE SCALE GENOMIC DNA]</scope>
    <source>
        <strain>ATCC 204508 / S288c</strain>
    </source>
</reference>
<reference key="2">
    <citation type="journal article" date="2014" name="G3 (Bethesda)">
        <title>The reference genome sequence of Saccharomyces cerevisiae: Then and now.</title>
        <authorList>
            <person name="Engel S.R."/>
            <person name="Dietrich F.S."/>
            <person name="Fisk D.G."/>
            <person name="Binkley G."/>
            <person name="Balakrishnan R."/>
            <person name="Costanzo M.C."/>
            <person name="Dwight S.S."/>
            <person name="Hitz B.C."/>
            <person name="Karra K."/>
            <person name="Nash R.S."/>
            <person name="Weng S."/>
            <person name="Wong E.D."/>
            <person name="Lloyd P."/>
            <person name="Skrzypek M.S."/>
            <person name="Miyasato S.R."/>
            <person name="Simison M."/>
            <person name="Cherry J.M."/>
        </authorList>
    </citation>
    <scope>GENOME REANNOTATION</scope>
    <source>
        <strain>ATCC 204508 / S288c</strain>
    </source>
</reference>
<reference key="3">
    <citation type="journal article" date="1997" name="Cell">
        <title>The yeast tRNA splicing endonuclease: a tetrameric enzyme with two active site subunits homologous to the archaeal tRNA endonucleases.</title>
        <authorList>
            <person name="Trotta C.R."/>
            <person name="Miao F."/>
            <person name="Arn E.A."/>
            <person name="Stevens S.W."/>
            <person name="Ho C.K."/>
            <person name="Rauhut R."/>
            <person name="Abelson J.N."/>
        </authorList>
    </citation>
    <scope>CHARACTERIZATION</scope>
    <scope>PROTEIN SEQUENCE OF 322-332</scope>
    <scope>SUBUNIT</scope>
</reference>
<reference key="4">
    <citation type="journal article" date="2003" name="Mol. Biol. Cell">
        <title>Possibility of cytoplasmic pre-tRNA splicing: the yeast tRNA splicing endonuclease mainly localizes on the mitochondria.</title>
        <authorList>
            <person name="Yoshihisa T."/>
            <person name="Yunoki-Esaki K."/>
            <person name="Ohshima C."/>
            <person name="Tanaka N."/>
            <person name="Endo T."/>
        </authorList>
    </citation>
    <scope>SUBCELLULAR LOCATION</scope>
</reference>
<reference key="5">
    <citation type="journal article" date="2003" name="Nature">
        <title>Global analysis of protein expression in yeast.</title>
        <authorList>
            <person name="Ghaemmaghami S."/>
            <person name="Huh W.-K."/>
            <person name="Bower K."/>
            <person name="Howson R.W."/>
            <person name="Belle A."/>
            <person name="Dephoure N."/>
            <person name="O'Shea E.K."/>
            <person name="Weissman J.S."/>
        </authorList>
    </citation>
    <scope>LEVEL OF PROTEIN EXPRESSION [LARGE SCALE ANALYSIS]</scope>
</reference>
<reference key="6">
    <citation type="journal article" date="2006" name="J. Proteome Res.">
        <title>Toward the complete yeast mitochondrial proteome: multidimensional separation techniques for mitochondrial proteomics.</title>
        <authorList>
            <person name="Reinders J."/>
            <person name="Zahedi R.P."/>
            <person name="Pfanner N."/>
            <person name="Meisinger C."/>
            <person name="Sickmann A."/>
        </authorList>
    </citation>
    <scope>SUBCELLULAR LOCATION [LARGE SCALE ANALYSIS]</scope>
    <scope>IDENTIFICATION BY MASS SPECTROMETRY</scope>
</reference>
<name>SEN54_YEAST</name>
<proteinExistence type="evidence at protein level"/>